<name>FUCL4_ANGJA</name>
<accession>Q9I928</accession>
<protein>
    <recommendedName>
        <fullName>Fucolectin-4</fullName>
    </recommendedName>
</protein>
<proteinExistence type="evidence at transcript level"/>
<keyword id="KW-0106">Calcium</keyword>
<keyword id="KW-1015">Disulfide bond</keyword>
<keyword id="KW-0430">Lectin</keyword>
<keyword id="KW-0479">Metal-binding</keyword>
<keyword id="KW-0964">Secreted</keyword>
<keyword id="KW-0732">Signal</keyword>
<reference evidence="5 6" key="1">
    <citation type="journal article" date="2000" name="J. Biol. Chem.">
        <title>Multiplicity, structures, and endocrine and exocrine natures of eel fucose-binding lectins.</title>
        <authorList>
            <person name="Honda S."/>
            <person name="Kashiwagi M."/>
            <person name="Miyamoto K."/>
            <person name="Takei Y."/>
            <person name="Hirose S."/>
        </authorList>
    </citation>
    <scope>NUCLEOTIDE SEQUENCE [MRNA]</scope>
    <scope>FUNCTION</scope>
    <scope>SUBCELLULAR LOCATION</scope>
    <scope>TISSUE SPECIFICITY</scope>
    <source>
        <tissue evidence="6">Gill</tissue>
    </source>
</reference>
<feature type="signal peptide" evidence="3">
    <location>
        <begin position="1"/>
        <end position="23"/>
    </location>
</feature>
<feature type="chain" id="PRO_0000223935" description="Fucolectin-4" evidence="5">
    <location>
        <begin position="24"/>
        <end position="179"/>
    </location>
</feature>
<feature type="region of interest" description="F5/8 type C-like">
    <location>
        <begin position="31"/>
        <end position="179"/>
    </location>
</feature>
<feature type="short sequence motif" description="Cell attachment site" evidence="3">
    <location>
        <begin position="101"/>
        <end position="103"/>
    </location>
</feature>
<feature type="binding site" evidence="1">
    <location>
        <position position="58"/>
    </location>
    <ligand>
        <name>Ca(2+)</name>
        <dbReference type="ChEBI" id="CHEBI:29108"/>
    </ligand>
</feature>
<feature type="binding site" evidence="2">
    <location>
        <position position="61"/>
    </location>
    <ligand>
        <name>Ca(2+)</name>
        <dbReference type="ChEBI" id="CHEBI:29108"/>
    </ligand>
</feature>
<feature type="binding site" evidence="1">
    <location>
        <position position="63"/>
    </location>
    <ligand>
        <name>Ca(2+)</name>
        <dbReference type="ChEBI" id="CHEBI:29108"/>
    </ligand>
</feature>
<feature type="binding site" evidence="2">
    <location>
        <position position="72"/>
    </location>
    <ligand>
        <name>Ca(2+)</name>
        <dbReference type="ChEBI" id="CHEBI:29108"/>
    </ligand>
</feature>
<feature type="binding site" evidence="2">
    <location>
        <position position="75"/>
    </location>
    <ligand>
        <name>alpha-L-fucose</name>
        <dbReference type="ChEBI" id="CHEBI:42548"/>
    </ligand>
</feature>
<feature type="binding site" evidence="2">
    <location>
        <position position="101"/>
    </location>
    <ligand>
        <name>alpha-L-fucose</name>
        <dbReference type="ChEBI" id="CHEBI:42548"/>
    </ligand>
</feature>
<feature type="binding site" evidence="2">
    <location>
        <position position="108"/>
    </location>
    <ligand>
        <name>alpha-L-fucose</name>
        <dbReference type="ChEBI" id="CHEBI:42548"/>
    </ligand>
</feature>
<feature type="binding site" evidence="1">
    <location>
        <position position="168"/>
    </location>
    <ligand>
        <name>Ca(2+)</name>
        <dbReference type="ChEBI" id="CHEBI:29108"/>
    </ligand>
</feature>
<feature type="binding site" evidence="2">
    <location>
        <position position="169"/>
    </location>
    <ligand>
        <name>Ca(2+)</name>
        <dbReference type="ChEBI" id="CHEBI:29108"/>
    </ligand>
</feature>
<feature type="disulfide bond" evidence="2">
    <location>
        <begin position="73"/>
        <end position="168"/>
    </location>
</feature>
<feature type="disulfide bond" evidence="2">
    <location>
        <begin position="104"/>
        <end position="105"/>
    </location>
</feature>
<feature type="disulfide bond" evidence="2">
    <location>
        <begin position="130"/>
        <end position="146"/>
    </location>
</feature>
<organism>
    <name type="scientific">Anguilla japonica</name>
    <name type="common">Japanese eel</name>
    <dbReference type="NCBI Taxonomy" id="7937"/>
    <lineage>
        <taxon>Eukaryota</taxon>
        <taxon>Metazoa</taxon>
        <taxon>Chordata</taxon>
        <taxon>Craniata</taxon>
        <taxon>Vertebrata</taxon>
        <taxon>Euteleostomi</taxon>
        <taxon>Actinopterygii</taxon>
        <taxon>Neopterygii</taxon>
        <taxon>Teleostei</taxon>
        <taxon>Anguilliformes</taxon>
        <taxon>Anguillidae</taxon>
        <taxon>Anguilla</taxon>
    </lineage>
</organism>
<sequence length="179" mass="19467">MEVKTIMLLFQILAISTLKQGSAHVPDGYVEENVALRGRATQSAQLRGEHAALAHASNAIDGNRDSNYHHGSCTHTEGANPWWRVDLLQVYTIASVTITNRGDCCGERISGARILIGNSLENNGINNPQCSVIGSLATGETRTFHCPQPMIGRYVTVYLPKIESLQLCEVEVNALLPVN</sequence>
<dbReference type="EMBL" id="AB037870">
    <property type="protein sequence ID" value="BAB03526.1"/>
    <property type="molecule type" value="mRNA"/>
</dbReference>
<dbReference type="SMR" id="Q9I928"/>
<dbReference type="CAZy" id="CBM47">
    <property type="family name" value="Carbohydrate-Binding Module Family 47"/>
</dbReference>
<dbReference type="GO" id="GO:0005615">
    <property type="term" value="C:extracellular space"/>
    <property type="evidence" value="ECO:0000314"/>
    <property type="project" value="UniProtKB"/>
</dbReference>
<dbReference type="GO" id="GO:0005509">
    <property type="term" value="F:calcium ion binding"/>
    <property type="evidence" value="ECO:0000250"/>
    <property type="project" value="UniProtKB"/>
</dbReference>
<dbReference type="GO" id="GO:0030246">
    <property type="term" value="F:carbohydrate binding"/>
    <property type="evidence" value="ECO:0000314"/>
    <property type="project" value="UniProtKB"/>
</dbReference>
<dbReference type="GO" id="GO:0042806">
    <property type="term" value="F:fucose binding"/>
    <property type="evidence" value="ECO:0000314"/>
    <property type="project" value="UniProtKB"/>
</dbReference>
<dbReference type="GO" id="GO:0010185">
    <property type="term" value="P:regulation of cellular defense response"/>
    <property type="evidence" value="ECO:0000304"/>
    <property type="project" value="UniProtKB"/>
</dbReference>
<dbReference type="GO" id="GO:0001868">
    <property type="term" value="P:regulation of complement activation, lectin pathway"/>
    <property type="evidence" value="ECO:0000304"/>
    <property type="project" value="UniProtKB"/>
</dbReference>
<dbReference type="GO" id="GO:0045088">
    <property type="term" value="P:regulation of innate immune response"/>
    <property type="evidence" value="ECO:0000304"/>
    <property type="project" value="UniProtKB"/>
</dbReference>
<dbReference type="FunFam" id="2.60.120.260:FF:000183">
    <property type="entry name" value="Fucolectin"/>
    <property type="match status" value="1"/>
</dbReference>
<dbReference type="Gene3D" id="2.60.120.260">
    <property type="entry name" value="Galactose-binding domain-like"/>
    <property type="match status" value="1"/>
</dbReference>
<dbReference type="InterPro" id="IPR051941">
    <property type="entry name" value="BG_Antigen-Binding_Lectin"/>
</dbReference>
<dbReference type="InterPro" id="IPR006585">
    <property type="entry name" value="FTP1"/>
</dbReference>
<dbReference type="InterPro" id="IPR008979">
    <property type="entry name" value="Galactose-bd-like_sf"/>
</dbReference>
<dbReference type="PANTHER" id="PTHR45713">
    <property type="entry name" value="FTP DOMAIN-CONTAINING PROTEIN"/>
    <property type="match status" value="1"/>
</dbReference>
<dbReference type="PANTHER" id="PTHR45713:SF8">
    <property type="entry name" value="SI:CH211-215K15.4"/>
    <property type="match status" value="1"/>
</dbReference>
<dbReference type="Pfam" id="PF22633">
    <property type="entry name" value="F5_F8_type_C_2"/>
    <property type="match status" value="1"/>
</dbReference>
<dbReference type="SMART" id="SM00607">
    <property type="entry name" value="FTP"/>
    <property type="match status" value="1"/>
</dbReference>
<dbReference type="SUPFAM" id="SSF49785">
    <property type="entry name" value="Galactose-binding domain-like"/>
    <property type="match status" value="1"/>
</dbReference>
<evidence type="ECO:0000250" key="1"/>
<evidence type="ECO:0000250" key="2">
    <source>
        <dbReference type="UniProtKB" id="Q7SIC1"/>
    </source>
</evidence>
<evidence type="ECO:0000255" key="3"/>
<evidence type="ECO:0000269" key="4">
    <source>
    </source>
</evidence>
<evidence type="ECO:0000305" key="5"/>
<evidence type="ECO:0000312" key="6">
    <source>
        <dbReference type="EMBL" id="BAB03526.1"/>
    </source>
</evidence>
<comment type="function">
    <text evidence="4">Acts as a defensive agent. Recognizes blood group fucosylated oligosaccharides including A, B, H and Lewis B-type antigens. Does not recognize Lewis A antigen and has low affinity for monovalent haptens.</text>
</comment>
<comment type="subunit">
    <text evidence="2">Homotrimer.</text>
</comment>
<comment type="subcellular location">
    <subcellularLocation>
        <location evidence="4">Secreted</location>
    </subcellularLocation>
</comment>
<comment type="tissue specificity">
    <text evidence="4">Gill mucous cells.</text>
</comment>
<comment type="miscellaneous">
    <text evidence="1">Binds 1 calcium ion per monomer.</text>
</comment>
<comment type="similarity">
    <text evidence="5">Belongs to the fucolectin family.</text>
</comment>